<accession>Q26635</accession>
<dbReference type="EMBL" id="D38160">
    <property type="protein sequence ID" value="BAA07349.1"/>
    <property type="molecule type" value="mRNA"/>
</dbReference>
<dbReference type="PIR" id="S65687">
    <property type="entry name" value="S65687"/>
</dbReference>
<dbReference type="GO" id="GO:0005634">
    <property type="term" value="C:nucleus"/>
    <property type="evidence" value="ECO:0000314"/>
    <property type="project" value="UniProtKB"/>
</dbReference>
<dbReference type="GO" id="GO:0000981">
    <property type="term" value="F:DNA-binding transcription factor activity, RNA polymerase II-specific"/>
    <property type="evidence" value="ECO:0007669"/>
    <property type="project" value="TreeGrafter"/>
</dbReference>
<dbReference type="GO" id="GO:0000977">
    <property type="term" value="F:RNA polymerase II transcription regulatory region sequence-specific DNA binding"/>
    <property type="evidence" value="ECO:0007669"/>
    <property type="project" value="TreeGrafter"/>
</dbReference>
<dbReference type="GO" id="GO:0008270">
    <property type="term" value="F:zinc ion binding"/>
    <property type="evidence" value="ECO:0007669"/>
    <property type="project" value="UniProtKB-KW"/>
</dbReference>
<dbReference type="GO" id="GO:0006351">
    <property type="term" value="P:DNA-templated transcription"/>
    <property type="evidence" value="ECO:0000314"/>
    <property type="project" value="UniProtKB"/>
</dbReference>
<dbReference type="GO" id="GO:0006357">
    <property type="term" value="P:regulation of transcription by RNA polymerase II"/>
    <property type="evidence" value="ECO:0000314"/>
    <property type="project" value="UniProtKB"/>
</dbReference>
<dbReference type="Gene3D" id="3.30.160.60">
    <property type="entry name" value="Classic Zinc Finger"/>
    <property type="match status" value="2"/>
</dbReference>
<dbReference type="InterPro" id="IPR050717">
    <property type="entry name" value="C2H2-ZF_Transcription_Reg"/>
</dbReference>
<dbReference type="InterPro" id="IPR036236">
    <property type="entry name" value="Znf_C2H2_sf"/>
</dbReference>
<dbReference type="InterPro" id="IPR013087">
    <property type="entry name" value="Znf_C2H2_type"/>
</dbReference>
<dbReference type="PANTHER" id="PTHR14196">
    <property type="entry name" value="ODD-SKIPPED - RELATED"/>
    <property type="match status" value="1"/>
</dbReference>
<dbReference type="PANTHER" id="PTHR14196:SF0">
    <property type="entry name" value="PROTEIN BOWEL"/>
    <property type="match status" value="1"/>
</dbReference>
<dbReference type="Pfam" id="PF00096">
    <property type="entry name" value="zf-C2H2"/>
    <property type="match status" value="1"/>
</dbReference>
<dbReference type="SMART" id="SM00355">
    <property type="entry name" value="ZnF_C2H2"/>
    <property type="match status" value="3"/>
</dbReference>
<dbReference type="SUPFAM" id="SSF57667">
    <property type="entry name" value="beta-beta-alpha zinc fingers"/>
    <property type="match status" value="1"/>
</dbReference>
<dbReference type="PROSITE" id="PS00028">
    <property type="entry name" value="ZINC_FINGER_C2H2_1"/>
    <property type="match status" value="3"/>
</dbReference>
<dbReference type="PROSITE" id="PS50157">
    <property type="entry name" value="ZINC_FINGER_C2H2_2"/>
    <property type="match status" value="2"/>
</dbReference>
<keyword id="KW-0238">DNA-binding</keyword>
<keyword id="KW-0479">Metal-binding</keyword>
<keyword id="KW-0539">Nucleus</keyword>
<keyword id="KW-0677">Repeat</keyword>
<keyword id="KW-0804">Transcription</keyword>
<keyword id="KW-0805">Transcription regulation</keyword>
<keyword id="KW-0862">Zinc</keyword>
<keyword id="KW-0863">Zinc-finger</keyword>
<name>ATBP_SARPE</name>
<organism>
    <name type="scientific">Sarcophaga peregrina</name>
    <name type="common">Flesh fly</name>
    <name type="synonym">Boettcherisca peregrina</name>
    <dbReference type="NCBI Taxonomy" id="7386"/>
    <lineage>
        <taxon>Eukaryota</taxon>
        <taxon>Metazoa</taxon>
        <taxon>Ecdysozoa</taxon>
        <taxon>Arthropoda</taxon>
        <taxon>Hexapoda</taxon>
        <taxon>Insecta</taxon>
        <taxon>Pterygota</taxon>
        <taxon>Neoptera</taxon>
        <taxon>Endopterygota</taxon>
        <taxon>Diptera</taxon>
        <taxon>Brachycera</taxon>
        <taxon>Muscomorpha</taxon>
        <taxon>Oestroidea</taxon>
        <taxon>Sarcophagidae</taxon>
        <taxon>Sarcophaga</taxon>
        <taxon>Boettcherisca</taxon>
    </lineage>
</organism>
<evidence type="ECO:0000255" key="1">
    <source>
        <dbReference type="PROSITE-ProRule" id="PRU00042"/>
    </source>
</evidence>
<evidence type="ECO:0000256" key="2">
    <source>
        <dbReference type="SAM" id="MobiDB-lite"/>
    </source>
</evidence>
<evidence type="ECO:0000269" key="3">
    <source>
    </source>
</evidence>
<evidence type="ECO:0000269" key="4">
    <source>
    </source>
</evidence>
<evidence type="ECO:0000305" key="5"/>
<evidence type="ECO:0000312" key="6">
    <source>
        <dbReference type="EMBL" id="BAA07349.1"/>
    </source>
</evidence>
<sequence>MGFPRIISKNNKIYTKLGAFCLSGDGQQFWIVCHTCQEELQTQDKFWKHIQDEHNFMHGPKQEQGRTAAQAYMEAAEAAAMTPLPLYRKVSENDQQRDDVVSTEDEDMQKEPKDYTEMRAHDDQQQTAAVAIDIKLEPSSLSQQSAVQAQQQQQQQQQQQQQQQQQQQQQEQLQQQQQQQQTQQIEITTPLMYQIPQVHPPVSAYAALVQAPAINTLNMSVAAAAAAVASNQVPSTMANLLPQELQYKQELQYKQEVQQHKESTNNSTTASASSAMSSDDGERFYICDFENCGLKFKYHSRLELHRSVHSKVRRFACEICGASFKQSCNLSTHRKKKHALKGTTKATLVPSQSF</sequence>
<proteinExistence type="evidence at protein level"/>
<protein>
    <recommendedName>
        <fullName evidence="6">AT-rich binding protein</fullName>
    </recommendedName>
    <alternativeName>
        <fullName evidence="6">A/T-stretch binding protein</fullName>
    </alternativeName>
</protein>
<reference evidence="5 6" key="1">
    <citation type="journal article" date="1995" name="Eur. J. Biochem.">
        <title>Molecular cloning and nuclear localization of ATBP, a novel (A+T)-stretch-binding protein of Sarcophaga peregrina (flesh fly).</title>
        <authorList>
            <person name="Nakanishi-Matsui M."/>
            <person name="Kubo T."/>
            <person name="Natori S."/>
        </authorList>
    </citation>
    <scope>NUCLEOTIDE SEQUENCE [MRNA]</scope>
    <scope>SUBCELLULAR LOCATION</scope>
    <scope>TISSUE SPECIFICITY</scope>
</reference>
<reference evidence="5" key="2">
    <citation type="journal article" date="1994" name="Eur. J. Biochem.">
        <title>Purification and characterization of ATBP, a novel protein that binds to A/T stretches in three segments of the Sarcophaga lectin gene.</title>
        <authorList>
            <person name="Matsui M."/>
            <person name="Kobayashi A."/>
            <person name="Kubo T."/>
            <person name="Natori S."/>
        </authorList>
    </citation>
    <scope>FUNCTION</scope>
    <scope>SUBUNIT</scope>
    <scope>SUBCELLULAR LOCATION</scope>
</reference>
<feature type="chain" id="PRO_0000378619" description="AT-rich binding protein">
    <location>
        <begin position="1"/>
        <end position="354"/>
    </location>
</feature>
<feature type="zinc finger region" description="C2H2-type 1" evidence="1">
    <location>
        <begin position="31"/>
        <end position="54"/>
    </location>
</feature>
<feature type="zinc finger region" description="C2H2-type 2" evidence="1">
    <location>
        <begin position="285"/>
        <end position="309"/>
    </location>
</feature>
<feature type="zinc finger region" description="C2H2-type 3" evidence="1">
    <location>
        <begin position="315"/>
        <end position="338"/>
    </location>
</feature>
<feature type="region of interest" description="Disordered" evidence="2">
    <location>
        <begin position="84"/>
        <end position="124"/>
    </location>
</feature>
<feature type="region of interest" description="Disordered" evidence="2">
    <location>
        <begin position="256"/>
        <end position="276"/>
    </location>
</feature>
<feature type="compositionally biased region" description="Basic and acidic residues" evidence="2">
    <location>
        <begin position="89"/>
        <end position="100"/>
    </location>
</feature>
<feature type="compositionally biased region" description="Basic and acidic residues" evidence="2">
    <location>
        <begin position="109"/>
        <end position="124"/>
    </location>
</feature>
<feature type="compositionally biased region" description="Low complexity" evidence="2">
    <location>
        <begin position="264"/>
        <end position="276"/>
    </location>
</feature>
<comment type="function">
    <text evidence="4">May be a transcription factor for genes having (A+T) stretches in their promoter and/or enhancer regions. Binds to AT rich DNA.</text>
</comment>
<comment type="subunit">
    <text evidence="4">Homooctamer.</text>
</comment>
<comment type="subcellular location">
    <subcellularLocation>
        <location evidence="3 4">Nucleus</location>
    </subcellularLocation>
</comment>
<comment type="tissue specificity">
    <text evidence="3">Fat body.</text>
</comment>